<keyword id="KW-1185">Reference proteome</keyword>
<keyword id="KW-0687">Ribonucleoprotein</keyword>
<keyword id="KW-0689">Ribosomal protein</keyword>
<comment type="function">
    <text evidence="1">Involved in the binding of tRNA to the ribosomes.</text>
</comment>
<comment type="subunit">
    <text evidence="1">Part of the 30S ribosomal subunit.</text>
</comment>
<comment type="similarity">
    <text evidence="1">Belongs to the universal ribosomal protein uS10 family.</text>
</comment>
<dbReference type="EMBL" id="CP000468">
    <property type="protein sequence ID" value="ABJ02798.1"/>
    <property type="molecule type" value="Genomic_DNA"/>
</dbReference>
<dbReference type="RefSeq" id="WP_001181004.1">
    <property type="nucleotide sequence ID" value="NZ_CADILS010000044.1"/>
</dbReference>
<dbReference type="SMR" id="A1AGK8"/>
<dbReference type="GeneID" id="93778666"/>
<dbReference type="KEGG" id="ecv:APECO1_3130"/>
<dbReference type="HOGENOM" id="CLU_122625_1_3_6"/>
<dbReference type="Proteomes" id="UP000008216">
    <property type="component" value="Chromosome"/>
</dbReference>
<dbReference type="GO" id="GO:1990904">
    <property type="term" value="C:ribonucleoprotein complex"/>
    <property type="evidence" value="ECO:0007669"/>
    <property type="project" value="UniProtKB-KW"/>
</dbReference>
<dbReference type="GO" id="GO:0005840">
    <property type="term" value="C:ribosome"/>
    <property type="evidence" value="ECO:0007669"/>
    <property type="project" value="UniProtKB-KW"/>
</dbReference>
<dbReference type="GO" id="GO:0003735">
    <property type="term" value="F:structural constituent of ribosome"/>
    <property type="evidence" value="ECO:0007669"/>
    <property type="project" value="InterPro"/>
</dbReference>
<dbReference type="GO" id="GO:0000049">
    <property type="term" value="F:tRNA binding"/>
    <property type="evidence" value="ECO:0007669"/>
    <property type="project" value="UniProtKB-UniRule"/>
</dbReference>
<dbReference type="GO" id="GO:0006412">
    <property type="term" value="P:translation"/>
    <property type="evidence" value="ECO:0007669"/>
    <property type="project" value="UniProtKB-UniRule"/>
</dbReference>
<dbReference type="FunFam" id="3.30.70.600:FF:000001">
    <property type="entry name" value="30S ribosomal protein S10"/>
    <property type="match status" value="1"/>
</dbReference>
<dbReference type="Gene3D" id="3.30.70.600">
    <property type="entry name" value="Ribosomal protein S10 domain"/>
    <property type="match status" value="1"/>
</dbReference>
<dbReference type="HAMAP" id="MF_00508">
    <property type="entry name" value="Ribosomal_uS10"/>
    <property type="match status" value="1"/>
</dbReference>
<dbReference type="InterPro" id="IPR001848">
    <property type="entry name" value="Ribosomal_uS10"/>
</dbReference>
<dbReference type="InterPro" id="IPR018268">
    <property type="entry name" value="Ribosomal_uS10_CS"/>
</dbReference>
<dbReference type="InterPro" id="IPR027486">
    <property type="entry name" value="Ribosomal_uS10_dom"/>
</dbReference>
<dbReference type="InterPro" id="IPR036838">
    <property type="entry name" value="Ribosomal_uS10_dom_sf"/>
</dbReference>
<dbReference type="NCBIfam" id="NF001861">
    <property type="entry name" value="PRK00596.1"/>
    <property type="match status" value="1"/>
</dbReference>
<dbReference type="NCBIfam" id="TIGR01049">
    <property type="entry name" value="rpsJ_bact"/>
    <property type="match status" value="1"/>
</dbReference>
<dbReference type="PANTHER" id="PTHR11700">
    <property type="entry name" value="30S RIBOSOMAL PROTEIN S10 FAMILY MEMBER"/>
    <property type="match status" value="1"/>
</dbReference>
<dbReference type="Pfam" id="PF00338">
    <property type="entry name" value="Ribosomal_S10"/>
    <property type="match status" value="1"/>
</dbReference>
<dbReference type="PRINTS" id="PR00971">
    <property type="entry name" value="RIBOSOMALS10"/>
</dbReference>
<dbReference type="SMART" id="SM01403">
    <property type="entry name" value="Ribosomal_S10"/>
    <property type="match status" value="1"/>
</dbReference>
<dbReference type="SUPFAM" id="SSF54999">
    <property type="entry name" value="Ribosomal protein S10"/>
    <property type="match status" value="1"/>
</dbReference>
<dbReference type="PROSITE" id="PS00361">
    <property type="entry name" value="RIBOSOMAL_S10"/>
    <property type="match status" value="1"/>
</dbReference>
<reference key="1">
    <citation type="journal article" date="2007" name="J. Bacteriol.">
        <title>The genome sequence of avian pathogenic Escherichia coli strain O1:K1:H7 shares strong similarities with human extraintestinal pathogenic E. coli genomes.</title>
        <authorList>
            <person name="Johnson T.J."/>
            <person name="Kariyawasam S."/>
            <person name="Wannemuehler Y."/>
            <person name="Mangiamele P."/>
            <person name="Johnson S.J."/>
            <person name="Doetkott C."/>
            <person name="Skyberg J.A."/>
            <person name="Lynne A.M."/>
            <person name="Johnson J.R."/>
            <person name="Nolan L.K."/>
        </authorList>
    </citation>
    <scope>NUCLEOTIDE SEQUENCE [LARGE SCALE GENOMIC DNA]</scope>
</reference>
<gene>
    <name evidence="1" type="primary">rpsJ</name>
    <name type="ordered locus">Ecok1_33040</name>
    <name type="ORF">APECO1_3130</name>
</gene>
<organism>
    <name type="scientific">Escherichia coli O1:K1 / APEC</name>
    <dbReference type="NCBI Taxonomy" id="405955"/>
    <lineage>
        <taxon>Bacteria</taxon>
        <taxon>Pseudomonadati</taxon>
        <taxon>Pseudomonadota</taxon>
        <taxon>Gammaproteobacteria</taxon>
        <taxon>Enterobacterales</taxon>
        <taxon>Enterobacteriaceae</taxon>
        <taxon>Escherichia</taxon>
    </lineage>
</organism>
<name>RS10_ECOK1</name>
<sequence length="103" mass="11736">MQNQRIRIRLKAFDHRLIDQATAEIVETAKRTGAQVRGPIPLPTRKERFTVLISPHVNKDARDQYEIRTHLRLVDIVEPTEKTVDALMRLDLAAGVDVQISLG</sequence>
<feature type="chain" id="PRO_1000015018" description="Small ribosomal subunit protein uS10">
    <location>
        <begin position="1"/>
        <end position="103"/>
    </location>
</feature>
<evidence type="ECO:0000255" key="1">
    <source>
        <dbReference type="HAMAP-Rule" id="MF_00508"/>
    </source>
</evidence>
<evidence type="ECO:0000305" key="2"/>
<accession>A1AGK8</accession>
<proteinExistence type="inferred from homology"/>
<protein>
    <recommendedName>
        <fullName evidence="1">Small ribosomal subunit protein uS10</fullName>
    </recommendedName>
    <alternativeName>
        <fullName evidence="2">30S ribosomal protein S10</fullName>
    </alternativeName>
</protein>